<feature type="chain" id="PRO_1000078735" description="Glycine cleavage system H protein">
    <location>
        <begin position="1"/>
        <end position="128"/>
    </location>
</feature>
<feature type="domain" description="Lipoyl-binding" evidence="2">
    <location>
        <begin position="25"/>
        <end position="107"/>
    </location>
</feature>
<feature type="modified residue" description="N6-lipoyllysine" evidence="1">
    <location>
        <position position="66"/>
    </location>
</feature>
<accession>A9M2B7</accession>
<gene>
    <name evidence="1" type="primary">gcvH</name>
    <name type="ordered locus">NMCC_0521</name>
</gene>
<dbReference type="EMBL" id="CP000381">
    <property type="protein sequence ID" value="ABX72721.1"/>
    <property type="molecule type" value="Genomic_DNA"/>
</dbReference>
<dbReference type="SMR" id="A9M2B7"/>
<dbReference type="KEGG" id="nmn:NMCC_0521"/>
<dbReference type="HOGENOM" id="CLU_097408_2_1_4"/>
<dbReference type="Proteomes" id="UP000001177">
    <property type="component" value="Chromosome"/>
</dbReference>
<dbReference type="GO" id="GO:0005829">
    <property type="term" value="C:cytosol"/>
    <property type="evidence" value="ECO:0007669"/>
    <property type="project" value="TreeGrafter"/>
</dbReference>
<dbReference type="GO" id="GO:0005960">
    <property type="term" value="C:glycine cleavage complex"/>
    <property type="evidence" value="ECO:0007669"/>
    <property type="project" value="InterPro"/>
</dbReference>
<dbReference type="GO" id="GO:0019464">
    <property type="term" value="P:glycine decarboxylation via glycine cleavage system"/>
    <property type="evidence" value="ECO:0007669"/>
    <property type="project" value="UniProtKB-UniRule"/>
</dbReference>
<dbReference type="CDD" id="cd06848">
    <property type="entry name" value="GCS_H"/>
    <property type="match status" value="1"/>
</dbReference>
<dbReference type="Gene3D" id="2.40.50.100">
    <property type="match status" value="1"/>
</dbReference>
<dbReference type="HAMAP" id="MF_00272">
    <property type="entry name" value="GcvH"/>
    <property type="match status" value="1"/>
</dbReference>
<dbReference type="InterPro" id="IPR003016">
    <property type="entry name" value="2-oxoA_DH_lipoyl-BS"/>
</dbReference>
<dbReference type="InterPro" id="IPR000089">
    <property type="entry name" value="Biotin_lipoyl"/>
</dbReference>
<dbReference type="InterPro" id="IPR002930">
    <property type="entry name" value="GCV_H"/>
</dbReference>
<dbReference type="InterPro" id="IPR033753">
    <property type="entry name" value="GCV_H/Fam206"/>
</dbReference>
<dbReference type="InterPro" id="IPR017453">
    <property type="entry name" value="GCV_H_sub"/>
</dbReference>
<dbReference type="InterPro" id="IPR011053">
    <property type="entry name" value="Single_hybrid_motif"/>
</dbReference>
<dbReference type="NCBIfam" id="TIGR00527">
    <property type="entry name" value="gcvH"/>
    <property type="match status" value="1"/>
</dbReference>
<dbReference type="NCBIfam" id="NF002270">
    <property type="entry name" value="PRK01202.1"/>
    <property type="match status" value="1"/>
</dbReference>
<dbReference type="PANTHER" id="PTHR11715">
    <property type="entry name" value="GLYCINE CLEAVAGE SYSTEM H PROTEIN"/>
    <property type="match status" value="1"/>
</dbReference>
<dbReference type="PANTHER" id="PTHR11715:SF3">
    <property type="entry name" value="GLYCINE CLEAVAGE SYSTEM H PROTEIN-RELATED"/>
    <property type="match status" value="1"/>
</dbReference>
<dbReference type="Pfam" id="PF01597">
    <property type="entry name" value="GCV_H"/>
    <property type="match status" value="1"/>
</dbReference>
<dbReference type="SUPFAM" id="SSF51230">
    <property type="entry name" value="Single hybrid motif"/>
    <property type="match status" value="1"/>
</dbReference>
<dbReference type="PROSITE" id="PS50968">
    <property type="entry name" value="BIOTINYL_LIPOYL"/>
    <property type="match status" value="1"/>
</dbReference>
<dbReference type="PROSITE" id="PS00189">
    <property type="entry name" value="LIPOYL"/>
    <property type="match status" value="1"/>
</dbReference>
<sequence length="128" mass="13597">MSNNIPAELKYVASHEWLRLEEDGTITVGITHHAQELLGDIVFVELPEVGANLAAEEQAGVVESVKAASDVYAPIAGEVVAVNDDLPSAPETANSDPYGAGWFFKIKPANPADYDGLLTAEQYAGEVD</sequence>
<evidence type="ECO:0000255" key="1">
    <source>
        <dbReference type="HAMAP-Rule" id="MF_00272"/>
    </source>
</evidence>
<evidence type="ECO:0000255" key="2">
    <source>
        <dbReference type="PROSITE-ProRule" id="PRU01066"/>
    </source>
</evidence>
<name>GCSH_NEIM0</name>
<protein>
    <recommendedName>
        <fullName evidence="1">Glycine cleavage system H protein</fullName>
    </recommendedName>
</protein>
<proteinExistence type="inferred from homology"/>
<organism>
    <name type="scientific">Neisseria meningitidis serogroup C (strain 053442)</name>
    <dbReference type="NCBI Taxonomy" id="374833"/>
    <lineage>
        <taxon>Bacteria</taxon>
        <taxon>Pseudomonadati</taxon>
        <taxon>Pseudomonadota</taxon>
        <taxon>Betaproteobacteria</taxon>
        <taxon>Neisseriales</taxon>
        <taxon>Neisseriaceae</taxon>
        <taxon>Neisseria</taxon>
    </lineage>
</organism>
<keyword id="KW-0450">Lipoyl</keyword>
<comment type="function">
    <text evidence="1">The glycine cleavage system catalyzes the degradation of glycine. The H protein shuttles the methylamine group of glycine from the P protein to the T protein.</text>
</comment>
<comment type="cofactor">
    <cofactor evidence="1">
        <name>(R)-lipoate</name>
        <dbReference type="ChEBI" id="CHEBI:83088"/>
    </cofactor>
    <text evidence="1">Binds 1 lipoyl cofactor covalently.</text>
</comment>
<comment type="subunit">
    <text evidence="1">The glycine cleavage system is composed of four proteins: P, T, L and H.</text>
</comment>
<comment type="similarity">
    <text evidence="1">Belongs to the GcvH family.</text>
</comment>
<reference key="1">
    <citation type="journal article" date="2008" name="Genomics">
        <title>Characterization of ST-4821 complex, a unique Neisseria meningitidis clone.</title>
        <authorList>
            <person name="Peng J."/>
            <person name="Yang L."/>
            <person name="Yang F."/>
            <person name="Yang J."/>
            <person name="Yan Y."/>
            <person name="Nie H."/>
            <person name="Zhang X."/>
            <person name="Xiong Z."/>
            <person name="Jiang Y."/>
            <person name="Cheng F."/>
            <person name="Xu X."/>
            <person name="Chen S."/>
            <person name="Sun L."/>
            <person name="Li W."/>
            <person name="Shen Y."/>
            <person name="Shao Z."/>
            <person name="Liang X."/>
            <person name="Xu J."/>
            <person name="Jin Q."/>
        </authorList>
    </citation>
    <scope>NUCLEOTIDE SEQUENCE [LARGE SCALE GENOMIC DNA]</scope>
    <source>
        <strain>053442</strain>
    </source>
</reference>